<dbReference type="EMBL" id="AB030710">
    <property type="protein sequence ID" value="BAB21548.1"/>
    <property type="molecule type" value="mRNA"/>
</dbReference>
<dbReference type="EMBL" id="AF087848">
    <property type="protein sequence ID" value="AAK20400.1"/>
    <property type="molecule type" value="mRNA"/>
</dbReference>
<dbReference type="EMBL" id="AJ010569">
    <property type="protein sequence ID" value="CAA09249.1"/>
    <property type="molecule type" value="mRNA"/>
</dbReference>
<dbReference type="EMBL" id="AF077046">
    <property type="protein sequence ID" value="AAD27779.1"/>
    <property type="molecule type" value="mRNA"/>
</dbReference>
<dbReference type="EMBL" id="CR542217">
    <property type="protein sequence ID" value="CAG47013.1"/>
    <property type="molecule type" value="mRNA"/>
</dbReference>
<dbReference type="EMBL" id="AK289788">
    <property type="protein sequence ID" value="BAF82477.1"/>
    <property type="molecule type" value="mRNA"/>
</dbReference>
<dbReference type="EMBL" id="CH471114">
    <property type="protein sequence ID" value="EAW95630.1"/>
    <property type="molecule type" value="Genomic_DNA"/>
</dbReference>
<dbReference type="EMBL" id="BC005985">
    <property type="protein sequence ID" value="AAH05985.1"/>
    <property type="molecule type" value="mRNA"/>
</dbReference>
<dbReference type="EMBL" id="BC014594">
    <property type="protein sequence ID" value="AAH14594.1"/>
    <property type="molecule type" value="mRNA"/>
</dbReference>
<dbReference type="EMBL" id="BC029601">
    <property type="protein sequence ID" value="AAH29601.1"/>
    <property type="molecule type" value="mRNA"/>
</dbReference>
<dbReference type="CCDS" id="CCDS10921.1"/>
<dbReference type="RefSeq" id="NP_009216.1">
    <property type="nucleotide sequence ID" value="NM_007285.7"/>
</dbReference>
<dbReference type="PDB" id="4CO7">
    <property type="method" value="X-ray"/>
    <property type="resolution" value="2.00 A"/>
    <property type="chains" value="A/B=1-117"/>
</dbReference>
<dbReference type="PDB" id="6H8C">
    <property type="method" value="NMR"/>
    <property type="chains" value="A=1-116"/>
</dbReference>
<dbReference type="PDB" id="7LK3">
    <property type="method" value="X-ray"/>
    <property type="resolution" value="1.90 A"/>
    <property type="chains" value="A/B=1-117"/>
</dbReference>
<dbReference type="PDB" id="7YO8">
    <property type="method" value="X-ray"/>
    <property type="resolution" value="1.80 A"/>
    <property type="chains" value="A=1-116"/>
</dbReference>
<dbReference type="PDB" id="8Q6Q">
    <property type="method" value="X-ray"/>
    <property type="resolution" value="1.80 A"/>
    <property type="chains" value="A/B=1-117"/>
</dbReference>
<dbReference type="PDBsum" id="4CO7"/>
<dbReference type="PDBsum" id="6H8C"/>
<dbReference type="PDBsum" id="7LK3"/>
<dbReference type="PDBsum" id="7YO8"/>
<dbReference type="PDBsum" id="8Q6Q"/>
<dbReference type="SMR" id="P60520"/>
<dbReference type="BioGRID" id="116473">
    <property type="interactions" value="167"/>
</dbReference>
<dbReference type="DIP" id="DIP-35051N"/>
<dbReference type="ELM" id="P60520"/>
<dbReference type="FunCoup" id="P60520">
    <property type="interactions" value="1900"/>
</dbReference>
<dbReference type="IntAct" id="P60520">
    <property type="interactions" value="600"/>
</dbReference>
<dbReference type="MINT" id="P60520"/>
<dbReference type="STRING" id="9606.ENSP00000037243"/>
<dbReference type="ChEMBL" id="CHEMBL4879445"/>
<dbReference type="MoonDB" id="P60520">
    <property type="type" value="Predicted"/>
</dbReference>
<dbReference type="GlyGen" id="P60520">
    <property type="glycosylation" value="1 site, 1 O-linked glycan (1 site)"/>
</dbReference>
<dbReference type="iPTMnet" id="P60520"/>
<dbReference type="PhosphoSitePlus" id="P60520"/>
<dbReference type="SwissPalm" id="P60520"/>
<dbReference type="BioMuta" id="GABARAPL2"/>
<dbReference type="DMDM" id="44888808"/>
<dbReference type="jPOST" id="P60520"/>
<dbReference type="MassIVE" id="P60520"/>
<dbReference type="PaxDb" id="9606-ENSP00000037243"/>
<dbReference type="PeptideAtlas" id="P60520"/>
<dbReference type="ProteomicsDB" id="57214"/>
<dbReference type="Pumba" id="P60520"/>
<dbReference type="Antibodypedia" id="30328">
    <property type="antibodies" value="563 antibodies from 35 providers"/>
</dbReference>
<dbReference type="DNASU" id="11345"/>
<dbReference type="Ensembl" id="ENST00000037243.7">
    <property type="protein sequence ID" value="ENSP00000037243.2"/>
    <property type="gene ID" value="ENSG00000034713.8"/>
</dbReference>
<dbReference type="GeneID" id="11345"/>
<dbReference type="KEGG" id="hsa:11345"/>
<dbReference type="MANE-Select" id="ENST00000037243.7">
    <property type="protein sequence ID" value="ENSP00000037243.2"/>
    <property type="RefSeq nucleotide sequence ID" value="NM_007285.7"/>
    <property type="RefSeq protein sequence ID" value="NP_009216.1"/>
</dbReference>
<dbReference type="UCSC" id="uc002fen.3">
    <property type="organism name" value="human"/>
</dbReference>
<dbReference type="AGR" id="HGNC:13291"/>
<dbReference type="CTD" id="11345"/>
<dbReference type="DisGeNET" id="11345"/>
<dbReference type="GeneCards" id="GABARAPL2"/>
<dbReference type="HGNC" id="HGNC:13291">
    <property type="gene designation" value="GABARAPL2"/>
</dbReference>
<dbReference type="HPA" id="ENSG00000034713">
    <property type="expression patterns" value="Low tissue specificity"/>
</dbReference>
<dbReference type="MIM" id="607452">
    <property type="type" value="gene"/>
</dbReference>
<dbReference type="neXtProt" id="NX_P60520"/>
<dbReference type="OpenTargets" id="ENSG00000034713"/>
<dbReference type="PharmGKB" id="PA28482"/>
<dbReference type="VEuPathDB" id="HostDB:ENSG00000034713"/>
<dbReference type="eggNOG" id="KOG1654">
    <property type="taxonomic scope" value="Eukaryota"/>
</dbReference>
<dbReference type="GeneTree" id="ENSGT00940000155010"/>
<dbReference type="HOGENOM" id="CLU_119276_0_1_1"/>
<dbReference type="InParanoid" id="P60520"/>
<dbReference type="OMA" id="AKMKWMF"/>
<dbReference type="OrthoDB" id="6738456at2759"/>
<dbReference type="PAN-GO" id="P60520">
    <property type="GO annotations" value="8 GO annotations based on evolutionary models"/>
</dbReference>
<dbReference type="PhylomeDB" id="P60520"/>
<dbReference type="TreeFam" id="TF312964"/>
<dbReference type="PathwayCommons" id="P60520"/>
<dbReference type="Reactome" id="R-HSA-1632852">
    <property type="pathway name" value="Macroautophagy"/>
</dbReference>
<dbReference type="Reactome" id="R-HSA-8854214">
    <property type="pathway name" value="TBC/RABGAPs"/>
</dbReference>
<dbReference type="SABIO-RK" id="P60520"/>
<dbReference type="SignaLink" id="P60520"/>
<dbReference type="SIGNOR" id="P60520"/>
<dbReference type="BioGRID-ORCS" id="11345">
    <property type="hits" value="16 hits in 1165 CRISPR screens"/>
</dbReference>
<dbReference type="CD-CODE" id="DEE660B4">
    <property type="entry name" value="Stress granule"/>
</dbReference>
<dbReference type="CD-CODE" id="FB4E32DD">
    <property type="entry name" value="Presynaptic clusters and postsynaptic densities"/>
</dbReference>
<dbReference type="ChiTaRS" id="GABARAPL2">
    <property type="organism name" value="human"/>
</dbReference>
<dbReference type="EvolutionaryTrace" id="P60520"/>
<dbReference type="GeneWiki" id="GABARAPL2"/>
<dbReference type="GenomeRNAi" id="11345"/>
<dbReference type="Pharos" id="P60520">
    <property type="development level" value="Tbio"/>
</dbReference>
<dbReference type="PRO" id="PR:P60520"/>
<dbReference type="Proteomes" id="UP000005640">
    <property type="component" value="Chromosome 16"/>
</dbReference>
<dbReference type="RNAct" id="P60520">
    <property type="molecule type" value="protein"/>
</dbReference>
<dbReference type="Bgee" id="ENSG00000034713">
    <property type="expression patterns" value="Expressed in pons and 207 other cell types or tissues"/>
</dbReference>
<dbReference type="ExpressionAtlas" id="P60520">
    <property type="expression patterns" value="baseline and differential"/>
</dbReference>
<dbReference type="GO" id="GO:0005776">
    <property type="term" value="C:autophagosome"/>
    <property type="evidence" value="ECO:0000314"/>
    <property type="project" value="UniProtKB"/>
</dbReference>
<dbReference type="GO" id="GO:0000421">
    <property type="term" value="C:autophagosome membrane"/>
    <property type="evidence" value="ECO:0000314"/>
    <property type="project" value="UniProtKB"/>
</dbReference>
<dbReference type="GO" id="GO:0005737">
    <property type="term" value="C:cytoplasm"/>
    <property type="evidence" value="ECO:0000314"/>
    <property type="project" value="BHF-UCL"/>
</dbReference>
<dbReference type="GO" id="GO:0031410">
    <property type="term" value="C:cytoplasmic vesicle"/>
    <property type="evidence" value="ECO:0007669"/>
    <property type="project" value="UniProtKB-KW"/>
</dbReference>
<dbReference type="GO" id="GO:0005829">
    <property type="term" value="C:cytosol"/>
    <property type="evidence" value="ECO:0000250"/>
    <property type="project" value="UniProtKB"/>
</dbReference>
<dbReference type="GO" id="GO:0005789">
    <property type="term" value="C:endoplasmic reticulum membrane"/>
    <property type="evidence" value="ECO:0007669"/>
    <property type="project" value="UniProtKB-SubCell"/>
</dbReference>
<dbReference type="GO" id="GO:0005794">
    <property type="term" value="C:Golgi apparatus"/>
    <property type="evidence" value="ECO:0000250"/>
    <property type="project" value="UniProtKB"/>
</dbReference>
<dbReference type="GO" id="GO:0000139">
    <property type="term" value="C:Golgi membrane"/>
    <property type="evidence" value="ECO:0000314"/>
    <property type="project" value="BHF-UCL"/>
</dbReference>
<dbReference type="GO" id="GO:0051117">
    <property type="term" value="F:ATPase binding"/>
    <property type="evidence" value="ECO:0000250"/>
    <property type="project" value="UniProtKB"/>
</dbReference>
<dbReference type="GO" id="GO:0048487">
    <property type="term" value="F:beta-tubulin binding"/>
    <property type="evidence" value="ECO:0000250"/>
    <property type="project" value="UniProtKB"/>
</dbReference>
<dbReference type="GO" id="GO:0050811">
    <property type="term" value="F:GABA receptor binding"/>
    <property type="evidence" value="ECO:0000250"/>
    <property type="project" value="UniProtKB"/>
</dbReference>
<dbReference type="GO" id="GO:0008017">
    <property type="term" value="F:microtubule binding"/>
    <property type="evidence" value="ECO:0000303"/>
    <property type="project" value="UniProtKB"/>
</dbReference>
<dbReference type="GO" id="GO:0008429">
    <property type="term" value="F:phosphatidylethanolamine binding"/>
    <property type="evidence" value="ECO:0000314"/>
    <property type="project" value="UniProt"/>
</dbReference>
<dbReference type="GO" id="GO:0000149">
    <property type="term" value="F:SNARE binding"/>
    <property type="evidence" value="ECO:0000250"/>
    <property type="project" value="UniProtKB"/>
</dbReference>
<dbReference type="GO" id="GO:0031625">
    <property type="term" value="F:ubiquitin protein ligase binding"/>
    <property type="evidence" value="ECO:0000353"/>
    <property type="project" value="UniProtKB"/>
</dbReference>
<dbReference type="GO" id="GO:0000045">
    <property type="term" value="P:autophagosome assembly"/>
    <property type="evidence" value="ECO:0000318"/>
    <property type="project" value="GO_Central"/>
</dbReference>
<dbReference type="GO" id="GO:0097352">
    <property type="term" value="P:autophagosome maturation"/>
    <property type="evidence" value="ECO:0000318"/>
    <property type="project" value="GO_Central"/>
</dbReference>
<dbReference type="GO" id="GO:0006914">
    <property type="term" value="P:autophagy"/>
    <property type="evidence" value="ECO:0000303"/>
    <property type="project" value="UniProtKB"/>
</dbReference>
<dbReference type="GO" id="GO:0006995">
    <property type="term" value="P:cellular response to nitrogen starvation"/>
    <property type="evidence" value="ECO:0000318"/>
    <property type="project" value="GO_Central"/>
</dbReference>
<dbReference type="GO" id="GO:0006891">
    <property type="term" value="P:intra-Golgi vesicle-mediated transport"/>
    <property type="evidence" value="ECO:0000250"/>
    <property type="project" value="UniProtKB"/>
</dbReference>
<dbReference type="GO" id="GO:0000423">
    <property type="term" value="P:mitophagy"/>
    <property type="evidence" value="ECO:0000318"/>
    <property type="project" value="GO_Central"/>
</dbReference>
<dbReference type="GO" id="GO:1901799">
    <property type="term" value="P:negative regulation of proteasomal protein catabolic process"/>
    <property type="evidence" value="ECO:0000315"/>
    <property type="project" value="BHF-UCL"/>
</dbReference>
<dbReference type="GO" id="GO:0032781">
    <property type="term" value="P:positive regulation of ATP-dependent activity"/>
    <property type="evidence" value="ECO:0000250"/>
    <property type="project" value="UniProtKB"/>
</dbReference>
<dbReference type="GO" id="GO:0070972">
    <property type="term" value="P:protein localization to endoplasmic reticulum"/>
    <property type="evidence" value="ECO:0000314"/>
    <property type="project" value="UniProtKB"/>
</dbReference>
<dbReference type="GO" id="GO:0015031">
    <property type="term" value="P:protein transport"/>
    <property type="evidence" value="ECO:0007669"/>
    <property type="project" value="UniProtKB-KW"/>
</dbReference>
<dbReference type="CDD" id="cd17163">
    <property type="entry name" value="Ubl_ATG8_GABARAPL2"/>
    <property type="match status" value="1"/>
</dbReference>
<dbReference type="FunFam" id="3.10.20.90:FF:000077">
    <property type="entry name" value="gamma-aminobutyric acid receptor-associated protein-like 2"/>
    <property type="match status" value="1"/>
</dbReference>
<dbReference type="Gene3D" id="3.10.20.90">
    <property type="entry name" value="Phosphatidylinositol 3-kinase Catalytic Subunit, Chain A, domain 1"/>
    <property type="match status" value="1"/>
</dbReference>
<dbReference type="InterPro" id="IPR004241">
    <property type="entry name" value="Atg8-like"/>
</dbReference>
<dbReference type="InterPro" id="IPR029071">
    <property type="entry name" value="Ubiquitin-like_domsf"/>
</dbReference>
<dbReference type="PANTHER" id="PTHR10969">
    <property type="entry name" value="MICROTUBULE-ASSOCIATED PROTEINS 1A/1B LIGHT CHAIN 3-RELATED"/>
    <property type="match status" value="1"/>
</dbReference>
<dbReference type="Pfam" id="PF02991">
    <property type="entry name" value="ATG8"/>
    <property type="match status" value="1"/>
</dbReference>
<dbReference type="SUPFAM" id="SSF54236">
    <property type="entry name" value="Ubiquitin-like"/>
    <property type="match status" value="1"/>
</dbReference>
<accession>P60520</accession>
<accession>O08765</accession>
<accession>Q6FG91</accession>
<accession>Q9DCP8</accession>
<accession>Q9UQF7</accession>
<protein>
    <recommendedName>
        <fullName evidence="37">Gamma-aminobutyric acid receptor-associated protein-like 2</fullName>
    </recommendedName>
    <alternativeName>
        <fullName>GABA(A) receptor-associated protein-like 2</fullName>
    </alternativeName>
    <alternativeName>
        <fullName>Ganglioside expression factor 2</fullName>
        <shortName>GEF-2</shortName>
    </alternativeName>
    <alternativeName>
        <fullName>General protein transport factor p16</fullName>
    </alternativeName>
    <alternativeName>
        <fullName>Golgi-associated ATPase enhancer of 16 kDa</fullName>
        <shortName>GATE-16</shortName>
    </alternativeName>
    <alternativeName>
        <fullName>MAP1 light chain 3-related protein</fullName>
    </alternativeName>
</protein>
<keyword id="KW-0002">3D-structure</keyword>
<keyword id="KW-0007">Acetylation</keyword>
<keyword id="KW-0072">Autophagy</keyword>
<keyword id="KW-0968">Cytoplasmic vesicle</keyword>
<keyword id="KW-0256">Endoplasmic reticulum</keyword>
<keyword id="KW-0333">Golgi apparatus</keyword>
<keyword id="KW-0449">Lipoprotein</keyword>
<keyword id="KW-0472">Membrane</keyword>
<keyword id="KW-0597">Phosphoprotein</keyword>
<keyword id="KW-0653">Protein transport</keyword>
<keyword id="KW-1267">Proteomics identification</keyword>
<keyword id="KW-1185">Reference proteome</keyword>
<keyword id="KW-0813">Transport</keyword>
<organism>
    <name type="scientific">Homo sapiens</name>
    <name type="common">Human</name>
    <dbReference type="NCBI Taxonomy" id="9606"/>
    <lineage>
        <taxon>Eukaryota</taxon>
        <taxon>Metazoa</taxon>
        <taxon>Chordata</taxon>
        <taxon>Craniata</taxon>
        <taxon>Vertebrata</taxon>
        <taxon>Euteleostomi</taxon>
        <taxon>Mammalia</taxon>
        <taxon>Eutheria</taxon>
        <taxon>Euarchontoglires</taxon>
        <taxon>Primates</taxon>
        <taxon>Haplorrhini</taxon>
        <taxon>Catarrhini</taxon>
        <taxon>Hominidae</taxon>
        <taxon>Homo</taxon>
    </lineage>
</organism>
<proteinExistence type="evidence at protein level"/>
<reference key="1">
    <citation type="journal article" date="2000" name="Brain Res. Mol. Brain Res.">
        <title>Interaction of the Unc-51-like kinase and microtubule-associated protein light chain 3 related proteins in the brain: possible role of vesicular transport in axonal elongation.</title>
        <authorList>
            <person name="Okazaki N."/>
            <person name="Yan J."/>
            <person name="Yuasa S."/>
            <person name="Ueno T."/>
            <person name="Kominami E."/>
            <person name="Masuho Y."/>
            <person name="Koga H."/>
            <person name="Muramatsu M.-A."/>
        </authorList>
    </citation>
    <scope>NUCLEOTIDE SEQUENCE [MRNA]</scope>
    <scope>TISSUE SPECIFICITY</scope>
    <scope>INTERACTION WITH ULK1</scope>
    <source>
        <tissue>Frontal cortex</tissue>
    </source>
</reference>
<reference key="2">
    <citation type="journal article" date="2001" name="Genomics">
        <title>Cloning, expression patterns, and chromosome localization of three human and two mouse homologues of GABA(A) receptor-associated protein.</title>
        <authorList>
            <person name="Xin Y."/>
            <person name="Yu L."/>
            <person name="Chen Z."/>
            <person name="Zheng L."/>
            <person name="Fu Q."/>
            <person name="Jiang J."/>
            <person name="Zhang P."/>
            <person name="Gong R."/>
            <person name="Zhao S."/>
        </authorList>
    </citation>
    <scope>NUCLEOTIDE SEQUENCE [MRNA]</scope>
    <scope>TISSUE SPECIFICITY</scope>
</reference>
<reference key="3">
    <citation type="submission" date="1998-08" db="EMBL/GenBank/DDBJ databases">
        <authorList>
            <person name="Storch S."/>
            <person name="Braulke T."/>
        </authorList>
    </citation>
    <scope>NUCLEOTIDE SEQUENCE [MRNA]</scope>
</reference>
<reference key="4">
    <citation type="submission" date="1998-07" db="EMBL/GenBank/DDBJ databases">
        <title>Human GEF2 homolog gene.</title>
        <authorList>
            <person name="Song H."/>
            <person name="Peng Y."/>
            <person name="Yu Y."/>
            <person name="Fu G."/>
            <person name="Mao M."/>
            <person name="Zhang Q."/>
            <person name="Zhu H."/>
            <person name="Li G."/>
            <person name="Luo M."/>
            <person name="Chen J."/>
            <person name="Hu R."/>
        </authorList>
    </citation>
    <scope>NUCLEOTIDE SEQUENCE [MRNA]</scope>
    <source>
        <tissue>Pituitary</tissue>
    </source>
</reference>
<reference key="5">
    <citation type="submission" date="2004-06" db="EMBL/GenBank/DDBJ databases">
        <title>Cloning of human full open reading frames in Gateway(TM) system entry vector (pDONR201).</title>
        <authorList>
            <person name="Halleck A."/>
            <person name="Ebert L."/>
            <person name="Mkoundinya M."/>
            <person name="Schick M."/>
            <person name="Eisenstein S."/>
            <person name="Neubert P."/>
            <person name="Kstrang K."/>
            <person name="Schatten R."/>
            <person name="Shen B."/>
            <person name="Henze S."/>
            <person name="Mar W."/>
            <person name="Korn B."/>
            <person name="Zuo D."/>
            <person name="Hu Y."/>
            <person name="LaBaer J."/>
        </authorList>
    </citation>
    <scope>NUCLEOTIDE SEQUENCE [LARGE SCALE MRNA]</scope>
</reference>
<reference key="6">
    <citation type="journal article" date="2004" name="Nat. Genet.">
        <title>Complete sequencing and characterization of 21,243 full-length human cDNAs.</title>
        <authorList>
            <person name="Ota T."/>
            <person name="Suzuki Y."/>
            <person name="Nishikawa T."/>
            <person name="Otsuki T."/>
            <person name="Sugiyama T."/>
            <person name="Irie R."/>
            <person name="Wakamatsu A."/>
            <person name="Hayashi K."/>
            <person name="Sato H."/>
            <person name="Nagai K."/>
            <person name="Kimura K."/>
            <person name="Makita H."/>
            <person name="Sekine M."/>
            <person name="Obayashi M."/>
            <person name="Nishi T."/>
            <person name="Shibahara T."/>
            <person name="Tanaka T."/>
            <person name="Ishii S."/>
            <person name="Yamamoto J."/>
            <person name="Saito K."/>
            <person name="Kawai Y."/>
            <person name="Isono Y."/>
            <person name="Nakamura Y."/>
            <person name="Nagahari K."/>
            <person name="Murakami K."/>
            <person name="Yasuda T."/>
            <person name="Iwayanagi T."/>
            <person name="Wagatsuma M."/>
            <person name="Shiratori A."/>
            <person name="Sudo H."/>
            <person name="Hosoiri T."/>
            <person name="Kaku Y."/>
            <person name="Kodaira H."/>
            <person name="Kondo H."/>
            <person name="Sugawara M."/>
            <person name="Takahashi M."/>
            <person name="Kanda K."/>
            <person name="Yokoi T."/>
            <person name="Furuya T."/>
            <person name="Kikkawa E."/>
            <person name="Omura Y."/>
            <person name="Abe K."/>
            <person name="Kamihara K."/>
            <person name="Katsuta N."/>
            <person name="Sato K."/>
            <person name="Tanikawa M."/>
            <person name="Yamazaki M."/>
            <person name="Ninomiya K."/>
            <person name="Ishibashi T."/>
            <person name="Yamashita H."/>
            <person name="Murakawa K."/>
            <person name="Fujimori K."/>
            <person name="Tanai H."/>
            <person name="Kimata M."/>
            <person name="Watanabe M."/>
            <person name="Hiraoka S."/>
            <person name="Chiba Y."/>
            <person name="Ishida S."/>
            <person name="Ono Y."/>
            <person name="Takiguchi S."/>
            <person name="Watanabe S."/>
            <person name="Yosida M."/>
            <person name="Hotuta T."/>
            <person name="Kusano J."/>
            <person name="Kanehori K."/>
            <person name="Takahashi-Fujii A."/>
            <person name="Hara H."/>
            <person name="Tanase T.-O."/>
            <person name="Nomura Y."/>
            <person name="Togiya S."/>
            <person name="Komai F."/>
            <person name="Hara R."/>
            <person name="Takeuchi K."/>
            <person name="Arita M."/>
            <person name="Imose N."/>
            <person name="Musashino K."/>
            <person name="Yuuki H."/>
            <person name="Oshima A."/>
            <person name="Sasaki N."/>
            <person name="Aotsuka S."/>
            <person name="Yoshikawa Y."/>
            <person name="Matsunawa H."/>
            <person name="Ichihara T."/>
            <person name="Shiohata N."/>
            <person name="Sano S."/>
            <person name="Moriya S."/>
            <person name="Momiyama H."/>
            <person name="Satoh N."/>
            <person name="Takami S."/>
            <person name="Terashima Y."/>
            <person name="Suzuki O."/>
            <person name="Nakagawa S."/>
            <person name="Senoh A."/>
            <person name="Mizoguchi H."/>
            <person name="Goto Y."/>
            <person name="Shimizu F."/>
            <person name="Wakebe H."/>
            <person name="Hishigaki H."/>
            <person name="Watanabe T."/>
            <person name="Sugiyama A."/>
            <person name="Takemoto M."/>
            <person name="Kawakami B."/>
            <person name="Yamazaki M."/>
            <person name="Watanabe K."/>
            <person name="Kumagai A."/>
            <person name="Itakura S."/>
            <person name="Fukuzumi Y."/>
            <person name="Fujimori Y."/>
            <person name="Komiyama M."/>
            <person name="Tashiro H."/>
            <person name="Tanigami A."/>
            <person name="Fujiwara T."/>
            <person name="Ono T."/>
            <person name="Yamada K."/>
            <person name="Fujii Y."/>
            <person name="Ozaki K."/>
            <person name="Hirao M."/>
            <person name="Ohmori Y."/>
            <person name="Kawabata A."/>
            <person name="Hikiji T."/>
            <person name="Kobatake N."/>
            <person name="Inagaki H."/>
            <person name="Ikema Y."/>
            <person name="Okamoto S."/>
            <person name="Okitani R."/>
            <person name="Kawakami T."/>
            <person name="Noguchi S."/>
            <person name="Itoh T."/>
            <person name="Shigeta K."/>
            <person name="Senba T."/>
            <person name="Matsumura K."/>
            <person name="Nakajima Y."/>
            <person name="Mizuno T."/>
            <person name="Morinaga M."/>
            <person name="Sasaki M."/>
            <person name="Togashi T."/>
            <person name="Oyama M."/>
            <person name="Hata H."/>
            <person name="Watanabe M."/>
            <person name="Komatsu T."/>
            <person name="Mizushima-Sugano J."/>
            <person name="Satoh T."/>
            <person name="Shirai Y."/>
            <person name="Takahashi Y."/>
            <person name="Nakagawa K."/>
            <person name="Okumura K."/>
            <person name="Nagase T."/>
            <person name="Nomura N."/>
            <person name="Kikuchi H."/>
            <person name="Masuho Y."/>
            <person name="Yamashita R."/>
            <person name="Nakai K."/>
            <person name="Yada T."/>
            <person name="Nakamura Y."/>
            <person name="Ohara O."/>
            <person name="Isogai T."/>
            <person name="Sugano S."/>
        </authorList>
    </citation>
    <scope>NUCLEOTIDE SEQUENCE [LARGE SCALE MRNA]</scope>
    <source>
        <tissue>Brain</tissue>
    </source>
</reference>
<reference key="7">
    <citation type="submission" date="2005-09" db="EMBL/GenBank/DDBJ databases">
        <authorList>
            <person name="Mural R.J."/>
            <person name="Istrail S."/>
            <person name="Sutton G.G."/>
            <person name="Florea L."/>
            <person name="Halpern A.L."/>
            <person name="Mobarry C.M."/>
            <person name="Lippert R."/>
            <person name="Walenz B."/>
            <person name="Shatkay H."/>
            <person name="Dew I."/>
            <person name="Miller J.R."/>
            <person name="Flanigan M.J."/>
            <person name="Edwards N.J."/>
            <person name="Bolanos R."/>
            <person name="Fasulo D."/>
            <person name="Halldorsson B.V."/>
            <person name="Hannenhalli S."/>
            <person name="Turner R."/>
            <person name="Yooseph S."/>
            <person name="Lu F."/>
            <person name="Nusskern D.R."/>
            <person name="Shue B.C."/>
            <person name="Zheng X.H."/>
            <person name="Zhong F."/>
            <person name="Delcher A.L."/>
            <person name="Huson D.H."/>
            <person name="Kravitz S.A."/>
            <person name="Mouchard L."/>
            <person name="Reinert K."/>
            <person name="Remington K.A."/>
            <person name="Clark A.G."/>
            <person name="Waterman M.S."/>
            <person name="Eichler E.E."/>
            <person name="Adams M.D."/>
            <person name="Hunkapiller M.W."/>
            <person name="Myers E.W."/>
            <person name="Venter J.C."/>
        </authorList>
    </citation>
    <scope>NUCLEOTIDE SEQUENCE [LARGE SCALE GENOMIC DNA]</scope>
</reference>
<reference key="8">
    <citation type="journal article" date="2004" name="Genome Res.">
        <title>The status, quality, and expansion of the NIH full-length cDNA project: the Mammalian Gene Collection (MGC).</title>
        <authorList>
            <consortium name="The MGC Project Team"/>
        </authorList>
    </citation>
    <scope>NUCLEOTIDE SEQUENCE [LARGE SCALE MRNA]</scope>
    <source>
        <tissue>Brain</tissue>
        <tissue>Testis</tissue>
    </source>
</reference>
<reference key="9">
    <citation type="journal article" date="2001" name="J. Biol. Chem.">
        <title>The human homolog of Saccharomyces cerevisiae Apg7p is a Protein-activating enzyme for multiple substrates including human Apg12p, GATE-16, GABARAP, and MAP-LC3.</title>
        <authorList>
            <person name="Tanida I."/>
            <person name="Tanida-Miyake E."/>
            <person name="Ueno T."/>
            <person name="Kominami E."/>
        </authorList>
    </citation>
    <scope>INTERACTION WITH ATG7</scope>
</reference>
<reference key="10">
    <citation type="journal article" date="2002" name="J. Biol. Chem.">
        <title>Human Apg3p/Aut1p homologue is an authentic E2 enzyme for multiple substrates, GATE-16, GABARAP, and MAP-LC3, and facilitates the conjugation of hApg12p to hApg5p.</title>
        <authorList>
            <person name="Tanida I."/>
            <person name="Tanida-Miyake E."/>
            <person name="Komatsu M."/>
            <person name="Ueno T."/>
            <person name="Kominami E."/>
        </authorList>
    </citation>
    <scope>INTERACTION WITH ATG3</scope>
</reference>
<reference key="11">
    <citation type="journal article" date="2003" name="Biochem. Biophys. Res. Commun.">
        <title>GATE-16 and GABARAP are authentic modifiers mediated by Apg7 and Apg3.</title>
        <authorList>
            <person name="Tanida I."/>
            <person name="Komatsu M."/>
            <person name="Ueno T."/>
            <person name="Kominami E."/>
        </authorList>
    </citation>
    <scope>LIPIDATION AT GLY-116</scope>
    <scope>INTERACTION WITH ATG3 AND ATG7</scope>
    <scope>SUBCELLULAR LOCATION</scope>
</reference>
<reference key="12">
    <citation type="journal article" date="2004" name="J. Cell Sci.">
        <title>LC3, GABARAP and GATE16 localize to autophagosomal membrane depending on form-II formation.</title>
        <authorList>
            <person name="Kabeya Y."/>
            <person name="Mizushima N."/>
            <person name="Yamamoto A."/>
            <person name="Oshitani-Okamoto S."/>
            <person name="Ohsumi Y."/>
            <person name="Yoshimori T."/>
        </authorList>
    </citation>
    <scope>CLEAVAGE</scope>
    <scope>SUBCELLULAR LOCATION</scope>
    <scope>MUTAGENESIS OF GLY-116</scope>
</reference>
<reference key="13">
    <citation type="journal article" date="2007" name="J. Biol. Chem.">
        <title>p62/SQSTM1 binds directly to Atg8/LC3 to facilitate degradation of ubiquitinated protein aggregates by autophagy.</title>
        <authorList>
            <person name="Pankiv S."/>
            <person name="Clausen T.H."/>
            <person name="Lamark T."/>
            <person name="Brech A."/>
            <person name="Bruun J.A."/>
            <person name="Outzen H."/>
            <person name="Overvatn A."/>
            <person name="Bjorkoy G."/>
            <person name="Johansen T."/>
        </authorList>
    </citation>
    <scope>INTERACTION WITH SQSTM1</scope>
    <scope>SUBCELLULAR LOCATION</scope>
</reference>
<reference key="14">
    <citation type="journal article" date="2007" name="Science">
        <title>ATM and ATR substrate analysis reveals extensive protein networks responsive to DNA damage.</title>
        <authorList>
            <person name="Matsuoka S."/>
            <person name="Ballif B.A."/>
            <person name="Smogorzewska A."/>
            <person name="McDonald E.R. III"/>
            <person name="Hurov K.E."/>
            <person name="Luo J."/>
            <person name="Bakalarski C.E."/>
            <person name="Zhao Z."/>
            <person name="Solimini N."/>
            <person name="Lerenthal Y."/>
            <person name="Shiloh Y."/>
            <person name="Gygi S.P."/>
            <person name="Elledge S.J."/>
        </authorList>
    </citation>
    <scope>PHOSPHORYLATION [LARGE SCALE ANALYSIS] AT SER-39</scope>
    <scope>IDENTIFICATION BY MASS SPECTROMETRY [LARGE SCALE ANALYSIS]</scope>
    <source>
        <tissue>Embryonic kidney</tissue>
    </source>
</reference>
<reference key="15">
    <citation type="journal article" date="2009" name="Mol. Biol. Cell">
        <title>The TP53INP2 protein is required for autophagy in mammalian cells.</title>
        <authorList>
            <person name="Nowak J."/>
            <person name="Archange C."/>
            <person name="Tardivel-Lacombe J."/>
            <person name="Pontarotti P."/>
            <person name="Pebusque M.J."/>
            <person name="Vaccaro M.I."/>
            <person name="Velasco G."/>
            <person name="Dagorn J.C."/>
            <person name="Iovanna J.L."/>
        </authorList>
    </citation>
    <scope>SUBCELLULAR LOCATION</scope>
    <scope>INTERACTION WITH TP53INP2</scope>
</reference>
<reference key="16">
    <citation type="journal article" date="2009" name="Science">
        <title>Lysine acetylation targets protein complexes and co-regulates major cellular functions.</title>
        <authorList>
            <person name="Choudhary C."/>
            <person name="Kumar C."/>
            <person name="Gnad F."/>
            <person name="Nielsen M.L."/>
            <person name="Rehman M."/>
            <person name="Walther T.C."/>
            <person name="Olsen J.V."/>
            <person name="Mann M."/>
        </authorList>
    </citation>
    <scope>ACETYLATION [LARGE SCALE ANALYSIS] AT LYS-24</scope>
    <scope>IDENTIFICATION BY MASS SPECTROMETRY [LARGE SCALE ANALYSIS]</scope>
</reference>
<reference key="17">
    <citation type="journal article" date="2010" name="Autophagy">
        <title>Synthetic substrates for measuring activity of autophagy proteases: autophagins (Atg4).</title>
        <authorList>
            <person name="Shu C.W."/>
            <person name="Drag M."/>
            <person name="Bekes M."/>
            <person name="Zhai D."/>
            <person name="Salvesen G.S."/>
            <person name="Reed J.C."/>
        </authorList>
    </citation>
    <scope>CLEAVAGE BY ATG4B</scope>
</reference>
<reference key="18">
    <citation type="journal article" date="2010" name="EMBO J.">
        <title>LC3 and GATE-16/GABARAP subfamilies are both essential yet act differently in autophagosome biogenesis.</title>
        <authorList>
            <person name="Weidberg H."/>
            <person name="Shvets E."/>
            <person name="Shpilka T."/>
            <person name="Shimron F."/>
            <person name="Shinder V."/>
            <person name="Elazar Z."/>
        </authorList>
    </citation>
    <scope>FUNCTION</scope>
</reference>
<reference key="19">
    <citation type="journal article" date="2010" name="Nature">
        <title>Network organization of the human autophagy system.</title>
        <authorList>
            <person name="Behrends C."/>
            <person name="Sowa M.E."/>
            <person name="Gygi S.P."/>
            <person name="Harper J.W."/>
        </authorList>
    </citation>
    <scope>INTERACTION WITH TECPR2</scope>
</reference>
<reference key="20">
    <citation type="journal article" date="2011" name="BMC Syst. Biol.">
        <title>Initial characterization of the human central proteome.</title>
        <authorList>
            <person name="Burkard T.R."/>
            <person name="Planyavsky M."/>
            <person name="Kaupe I."/>
            <person name="Breitwieser F.P."/>
            <person name="Buerckstuemmer T."/>
            <person name="Bennett K.L."/>
            <person name="Superti-Furga G."/>
            <person name="Colinge J."/>
        </authorList>
    </citation>
    <scope>IDENTIFICATION BY MASS SPECTROMETRY [LARGE SCALE ANALYSIS]</scope>
</reference>
<reference key="21">
    <citation type="journal article" date="2011" name="J. Cell Biol.">
        <title>OATL1, a novel autophagosome-resident Rab33B-GAP, regulates autophagosomal maturation.</title>
        <authorList>
            <person name="Itoh T."/>
            <person name="Kanno E."/>
            <person name="Uemura T."/>
            <person name="Waguri S."/>
            <person name="Fukuda M."/>
        </authorList>
    </citation>
    <scope>INTERACTION WITH TBC1D25</scope>
</reference>
<reference key="22">
    <citation type="journal article" date="2012" name="Cell Death Differ.">
        <title>TP53INP1, a tumor suppressor, interacts with LC3 and ATG8-family proteins through the LC3-interacting region (LIR) and promotes autophagy-dependent cell death.</title>
        <authorList>
            <person name="Seillier M."/>
            <person name="Peuget S."/>
            <person name="Gayet O."/>
            <person name="Gauthier C."/>
            <person name="N'guessan P."/>
            <person name="Monte M."/>
            <person name="Carrier A."/>
            <person name="Iovanna J.L."/>
            <person name="Dusetti N.J."/>
        </authorList>
    </citation>
    <scope>INTERACTION WITH TP53INP1</scope>
</reference>
<reference key="23">
    <citation type="journal article" date="2012" name="J. Biol. Chem.">
        <title>ATG8 family proteins act as scaffolds for assembly of the ULK complex: sequence requirements for LC3-interacting region (LIR) motifs.</title>
        <authorList>
            <person name="Alemu E.A."/>
            <person name="Lamark T."/>
            <person name="Torgersen K.M."/>
            <person name="Birgisdottir A.B."/>
            <person name="Larsen K.B."/>
            <person name="Jain A."/>
            <person name="Olsvik H."/>
            <person name="Overvatn A."/>
            <person name="Kirkin V."/>
            <person name="Johansen T."/>
        </authorList>
    </citation>
    <scope>INTERACTION WITH ATG13 AND ULK1</scope>
</reference>
<reference key="24">
    <citation type="journal article" date="2012" name="Mol. Cell. Biol.">
        <title>Rab GTPase-activating proteins in autophagy: regulation of endocytic and autophagy pathways by direct binding to human ATG8 modifiers.</title>
        <authorList>
            <person name="Popovic D."/>
            <person name="Akutsu M."/>
            <person name="Novak I."/>
            <person name="Harper J.W."/>
            <person name="Behrends C."/>
            <person name="Dikic I."/>
        </authorList>
    </citation>
    <scope>INTERACTION WITH TBC1D5</scope>
</reference>
<reference key="25">
    <citation type="journal article" date="2012" name="Mol. Cell. Proteomics">
        <title>Identification of autophagosome-associated proteins and regulators by quantitative proteomic analysis and genetic screens.</title>
        <authorList>
            <person name="Dengjel J."/>
            <person name="Hoyer-Hansen M."/>
            <person name="Nielsen M.O."/>
            <person name="Eisenberg T."/>
            <person name="Harder L.M."/>
            <person name="Schandorff S."/>
            <person name="Farkas T."/>
            <person name="Kirkegaard T."/>
            <person name="Becker A.C."/>
            <person name="Schroeder S."/>
            <person name="Vanselow K."/>
            <person name="Lundberg E."/>
            <person name="Nielsen M.M."/>
            <person name="Kristensen A.R."/>
            <person name="Akimov V."/>
            <person name="Bunkenborg J."/>
            <person name="Madeo F."/>
            <person name="Jaattela M."/>
            <person name="Andersen J.S."/>
        </authorList>
    </citation>
    <scope>IDENTIFICATION BY MASS SPECTROMETRY</scope>
    <scope>SUBCELLULAR LOCATION</scope>
</reference>
<reference key="26">
    <citation type="journal article" date="2012" name="PLoS ONE">
        <title>DOR/Tp53inp2 and Tp53inp1 constitute a metazoan gene family encoding dual regulators of autophagy and transcription.</title>
        <authorList>
            <person name="Sancho A."/>
            <person name="Duran J."/>
            <person name="Garcia-Espana A."/>
            <person name="Mauvezin C."/>
            <person name="Alemu E.A."/>
            <person name="Lamark T."/>
            <person name="Macias M.J."/>
            <person name="Desalle R."/>
            <person name="Royo M."/>
            <person name="Sala D."/>
            <person name="Chicote J.U."/>
            <person name="Palacin M."/>
            <person name="Johansen T."/>
            <person name="Zorzano A."/>
        </authorList>
    </citation>
    <scope>INTERACTION WITH TP53INP1 AND TP53INP2</scope>
</reference>
<reference key="27">
    <citation type="journal article" date="2013" name="J. Biol. Chem.">
        <title>Modulation of serines 17 and 24 in the LC3-interacting region of Bnip3 determines pro-survival mitophagy versus apoptosis.</title>
        <authorList>
            <person name="Zhu Y."/>
            <person name="Massen S."/>
            <person name="Terenzio M."/>
            <person name="Lang V."/>
            <person name="Chen-Lindner S."/>
            <person name="Eils R."/>
            <person name="Novak I."/>
            <person name="Dikic I."/>
            <person name="Hamacher-Brady A."/>
            <person name="Brady N.R."/>
        </authorList>
    </citation>
    <scope>INTERACTION WITH BNIP3</scope>
    <scope>FUNCTION</scope>
</reference>
<reference key="28">
    <citation type="journal article" date="2013" name="Nature">
        <title>Autophagy promotes primary ciliogenesis by removing OFD1 from centriolar satellites.</title>
        <authorList>
            <person name="Tang Z."/>
            <person name="Lin M.G."/>
            <person name="Stowe T.R."/>
            <person name="Chen S."/>
            <person name="Zhu M."/>
            <person name="Stearns T."/>
            <person name="Franco B."/>
            <person name="Zhong Q."/>
        </authorList>
    </citation>
    <scope>INTERACTION WITH PCM1</scope>
</reference>
<reference key="29">
    <citation type="journal article" date="2014" name="Dev. Cell">
        <title>TRIM proteins regulate autophagy and can target autophagic substrates by direct recognition.</title>
        <authorList>
            <person name="Mandell M.A."/>
            <person name="Jain A."/>
            <person name="Arko-Mensah J."/>
            <person name="Chauhan S."/>
            <person name="Kimura T."/>
            <person name="Dinkins C."/>
            <person name="Silvestri G."/>
            <person name="Munch J."/>
            <person name="Kirchhoff F."/>
            <person name="Simonsen A."/>
            <person name="Wei Y."/>
            <person name="Levine B."/>
            <person name="Johansen T."/>
            <person name="Deretic V."/>
        </authorList>
    </citation>
    <scope>INTERACTION WITH TRIM5</scope>
</reference>
<reference key="30">
    <citation type="journal article" date="2014" name="EMBO Rep.">
        <title>Structural determinants in GABARAP required for the selective binding and recruitment of ALFY to LC3B-positive structures.</title>
        <authorList>
            <person name="Lystad A.H."/>
            <person name="Ichimura Y."/>
            <person name="Takagi K."/>
            <person name="Yang Y."/>
            <person name="Pankiv S."/>
            <person name="Kanegae Y."/>
            <person name="Kageyama S."/>
            <person name="Suzuki M."/>
            <person name="Saito I."/>
            <person name="Mizushima T."/>
            <person name="Komatsu M."/>
            <person name="Simonsen A."/>
        </authorList>
    </citation>
    <scope>INTERACTION WITH WDFY3</scope>
</reference>
<reference key="31">
    <citation type="journal article" date="2015" name="J. Cell Biol.">
        <title>TRIM-mediated precision autophagy targets cytoplasmic regulators of innate immunity.</title>
        <authorList>
            <person name="Kimura T."/>
            <person name="Jain A."/>
            <person name="Choi S.W."/>
            <person name="Mandell M.A."/>
            <person name="Schroder K."/>
            <person name="Johansen T."/>
            <person name="Deretic V."/>
        </authorList>
    </citation>
    <scope>INTERACTION WITH MEFV AND TRIM21</scope>
</reference>
<reference key="32">
    <citation type="journal article" date="2015" name="Mol. Cell">
        <title>CUL3-KBTBD6/KBTBD7 ubiquitin ligase cooperates with GABARAP proteins to spatially restrict TIAM1-RAC1 signaling.</title>
        <authorList>
            <person name="Genau H.M."/>
            <person name="Huber J."/>
            <person name="Baschieri F."/>
            <person name="Akutsu M."/>
            <person name="Doetsch V."/>
            <person name="Farhan H."/>
            <person name="Rogov V."/>
            <person name="Behrends C."/>
        </authorList>
    </citation>
    <scope>INTERACTION WITH KBTBD6 AND KBTBD7</scope>
</reference>
<reference key="33">
    <citation type="journal article" date="2016" name="J. Biol. Chem.">
        <title>Structural and functional analysis of a novel interaction motif within UFM1-activating enzyme 5 (UBA5) required for binding to ubiquitin-like proteins and ufmylation.</title>
        <authorList>
            <person name="Habisov S."/>
            <person name="Huber J."/>
            <person name="Ichimura Y."/>
            <person name="Akutsu M."/>
            <person name="Rogova N."/>
            <person name="Loehr F."/>
            <person name="McEwan D.G."/>
            <person name="Johansen T."/>
            <person name="Dikic I."/>
            <person name="Doetsch V."/>
            <person name="Komatsu M."/>
            <person name="Rogov V.V."/>
            <person name="Kirkin V."/>
        </authorList>
    </citation>
    <scope>INTERACTION WITH UBA5</scope>
</reference>
<reference key="34">
    <citation type="journal article" date="2018" name="Autophagy">
        <title>Delipidation of mammalian Atg8-family proteins by each of the four ATG4 proteases.</title>
        <authorList>
            <person name="Kauffman K.J."/>
            <person name="Yu S."/>
            <person name="Jin J."/>
            <person name="Mugo B."/>
            <person name="Nguyen N."/>
            <person name="O'Brien A."/>
            <person name="Nag S."/>
            <person name="Lystad A.H."/>
            <person name="Melia T.J."/>
        </authorList>
    </citation>
    <scope>PROTEOLYTIC CLEAVAGE</scope>
    <scope>DELIPIDATION</scope>
    <scope>LIPIDATION AT GLY-116</scope>
</reference>
<reference key="35">
    <citation type="journal article" date="2018" name="J. Cell Biol.">
        <title>Mechanism of Stx17 recruitment to autophagosomes via IRGM and mammalian Atg8 proteins.</title>
        <authorList>
            <person name="Kumar S."/>
            <person name="Jain A."/>
            <person name="Farzam F."/>
            <person name="Jia J."/>
            <person name="Gu Y."/>
            <person name="Choi S.W."/>
            <person name="Mudd M.H."/>
            <person name="Claude-Taupin A."/>
            <person name="Wester M.J."/>
            <person name="Lidke K.A."/>
            <person name="Rusten T.E."/>
            <person name="Deretic V."/>
        </authorList>
    </citation>
    <scope>INTERACTION WITH IRGM</scope>
</reference>
<reference key="36">
    <citation type="journal article" date="2019" name="Autophagy">
        <title>Redundancy of human ATG4 protease isoforms in autophagy and LC3/GABARAP processing revealed in cells.</title>
        <authorList>
            <person name="Agrotis A."/>
            <person name="Pengo N."/>
            <person name="Burden J.J."/>
            <person name="Ketteler R."/>
        </authorList>
    </citation>
    <scope>PROTEOLYTIC CLEAVAGE</scope>
</reference>
<reference key="37">
    <citation type="journal article" date="2019" name="BMB Rep.">
        <title>LIR motifs and the membrane-targeting domain are complementary in the function of RavZ.</title>
        <authorList>
            <person name="Park S.W."/>
            <person name="Jun Y.W."/>
            <person name="Jeon P."/>
            <person name="Lee Y.K."/>
            <person name="Park J.H."/>
            <person name="Lee S.H."/>
            <person name="Lee J.A."/>
            <person name="Jang D.J."/>
        </authorList>
    </citation>
    <scope>DECONJUGATION BY LEGIONELLA RAVZ (MICROBIAL INFECTION)</scope>
</reference>
<reference key="38">
    <citation type="journal article" date="2020" name="Dev. Cell">
        <title>A DNM2 Centronuclear Myopathy Mutation Reveals a Link between Recycling Endosome Scission and Autophagy.</title>
        <authorList>
            <person name="Puri C."/>
            <person name="Manni M.M."/>
            <person name="Vicinanza M."/>
            <person name="Hilcenko C."/>
            <person name="Zhu Y."/>
            <person name="Runwal G."/>
            <person name="Stamatakou E."/>
            <person name="Menzies F.M."/>
            <person name="Mamchaoui K."/>
            <person name="Bitoun M."/>
            <person name="Rubinsztein D.C."/>
        </authorList>
    </citation>
    <scope>INTERACTION WITH DNM2</scope>
</reference>
<reference key="39">
    <citation type="journal article" date="2020" name="EMBO Rep.">
        <title>TBK1-mediated phosphorylation of LC3C and GABARAP-L2 controls autophagosome shedding by ATG4 protease.</title>
        <authorList>
            <person name="Herhaus L."/>
            <person name="Bhaskara R.M."/>
            <person name="Lystad A.H."/>
            <person name="Gestal-Mato U."/>
            <person name="Covarrubias-Pinto A."/>
            <person name="Bonn F."/>
            <person name="Simonsen A."/>
            <person name="Hummer G."/>
            <person name="Dikic I."/>
        </authorList>
    </citation>
    <scope>PHOSPHORYLATION AT SER-87 AND SER-88</scope>
    <scope>LIPIDATION AT GLY-116</scope>
    <scope>SUBCELLULAR LOCATION</scope>
    <scope>MUTAGENESIS OF 87-SER-SER-88 AND SER-88</scope>
</reference>
<reference key="40">
    <citation type="journal article" date="2021" name="EMBO Rep.">
        <title>Role of FAM134 paralogues in endoplasmic reticulum remodeling, ER-phagy, and Collagen quality control.</title>
        <authorList>
            <person name="Reggio A."/>
            <person name="Buonomo V."/>
            <person name="Berkane R."/>
            <person name="Bhaskara R.M."/>
            <person name="Tellechea M."/>
            <person name="Peluso I."/>
            <person name="Polishchuk E."/>
            <person name="Di Lorenzo G."/>
            <person name="Cirillo C."/>
            <person name="Esposito M."/>
            <person name="Hussain A."/>
            <person name="Huebner A.K."/>
            <person name="Huebner C.A."/>
            <person name="Settembre C."/>
            <person name="Hummer G."/>
            <person name="Grumati P."/>
            <person name="Stolz A."/>
        </authorList>
    </citation>
    <scope>INTERACTION WITH RETREG1; RETREG2 AND RETREG3</scope>
</reference>
<reference key="41">
    <citation type="journal article" date="2021" name="Mol. Cell">
        <title>Non-canonical autophagy drives alternative ATG8 conjugation to phosphatidylserine.</title>
        <authorList>
            <person name="Durgan J."/>
            <person name="Lystad A.H."/>
            <person name="Sloan K."/>
            <person name="Carlsson S.R."/>
            <person name="Wilson M.I."/>
            <person name="Marcassa E."/>
            <person name="Ulferts R."/>
            <person name="Webster J."/>
            <person name="Lopez-Clavijo A.F."/>
            <person name="Wakelam M.J."/>
            <person name="Beale R."/>
            <person name="Simonsen A."/>
            <person name="Oxley D."/>
            <person name="Florey O."/>
        </authorList>
    </citation>
    <scope>LIPIDATION AT GLY-116</scope>
</reference>
<reference key="42">
    <citation type="journal article" date="2024" name="Cell">
        <title>IRGQ-mediated autophagy in MHC class I quality control promotes tumor immune evasion.</title>
        <authorList>
            <person name="Herhaus L."/>
            <person name="Gestal-Mato U."/>
            <person name="Eapen V.V."/>
            <person name="Macinkovic I."/>
            <person name="Bailey H.J."/>
            <person name="Prieto-Garcia C."/>
            <person name="Misra M."/>
            <person name="Jacomin A.C."/>
            <person name="Ammanath A.V."/>
            <person name="Bagaric I."/>
            <person name="Michaelis J."/>
            <person name="Vollrath J."/>
            <person name="Bhaskara R.M."/>
            <person name="Buendgen G."/>
            <person name="Covarrubias-Pinto A."/>
            <person name="Husnjak K."/>
            <person name="Zoeller J."/>
            <person name="Gikandi A."/>
            <person name="Ribicic S."/>
            <person name="Bopp T."/>
            <person name="van der Heden van Noort G.J."/>
            <person name="Langer J.D."/>
            <person name="Weigert A."/>
            <person name="Harper J.W."/>
            <person name="Mancias J.D."/>
            <person name="Dikic I."/>
        </authorList>
    </citation>
    <scope>INTERACTION WITH IRGQ</scope>
</reference>
<reference evidence="40" key="43">
    <citation type="journal article" date="2020" name="Autophagy">
        <title>An atypical LIR motif within UBA5 (ubiquitin like modifier activating enzyme 5) interacts with GABARAP proteins and mediates membrane localization of UBA5.</title>
        <authorList>
            <person name="Huber J."/>
            <person name="Obata M."/>
            <person name="Gruber J."/>
            <person name="Akutsu M."/>
            <person name="Lohr F."/>
            <person name="Rogova N."/>
            <person name="Guntert P."/>
            <person name="Dikic I."/>
            <person name="Kirkin V."/>
            <person name="Komatsu M."/>
            <person name="Dotsch V."/>
            <person name="Rogov V.V."/>
        </authorList>
    </citation>
    <scope>STRUCTURE BY NMR OF 1-116 IN COMPLEX WITH UBA5</scope>
    <scope>INTERACTION WITH UBA5</scope>
    <scope>SUBCELLULAR LOCATION</scope>
    <scope>MUTAGENESIS OF ARG-47</scope>
</reference>
<name>GBRL2_HUMAN</name>
<sequence>MKWMFKEDHSLEHRCVESAKIRAKYPDRVPVIVEKVSGSQIVDIDKRKYLVPSDITVAQFMWIIRKRIQLPSEKAIFLFVDKTVPQSSLTMGQLYEKEKDEDGFLYVAYSGENTFGF</sequence>
<evidence type="ECO:0000250" key="1">
    <source>
        <dbReference type="UniProtKB" id="P60519"/>
    </source>
</evidence>
<evidence type="ECO:0000250" key="2">
    <source>
        <dbReference type="UniProtKB" id="P60521"/>
    </source>
</evidence>
<evidence type="ECO:0000269" key="3">
    <source>
    </source>
</evidence>
<evidence type="ECO:0000269" key="4">
    <source>
    </source>
</evidence>
<evidence type="ECO:0000269" key="5">
    <source>
    </source>
</evidence>
<evidence type="ECO:0000269" key="6">
    <source>
    </source>
</evidence>
<evidence type="ECO:0000269" key="7">
    <source>
    </source>
</evidence>
<evidence type="ECO:0000269" key="8">
    <source>
    </source>
</evidence>
<evidence type="ECO:0000269" key="9">
    <source>
    </source>
</evidence>
<evidence type="ECO:0000269" key="10">
    <source>
    </source>
</evidence>
<evidence type="ECO:0000269" key="11">
    <source>
    </source>
</evidence>
<evidence type="ECO:0000269" key="12">
    <source>
    </source>
</evidence>
<evidence type="ECO:0000269" key="13">
    <source>
    </source>
</evidence>
<evidence type="ECO:0000269" key="14">
    <source>
    </source>
</evidence>
<evidence type="ECO:0000269" key="15">
    <source>
    </source>
</evidence>
<evidence type="ECO:0000269" key="16">
    <source>
    </source>
</evidence>
<evidence type="ECO:0000269" key="17">
    <source>
    </source>
</evidence>
<evidence type="ECO:0000269" key="18">
    <source>
    </source>
</evidence>
<evidence type="ECO:0000269" key="19">
    <source>
    </source>
</evidence>
<evidence type="ECO:0000269" key="20">
    <source>
    </source>
</evidence>
<evidence type="ECO:0000269" key="21">
    <source>
    </source>
</evidence>
<evidence type="ECO:0000269" key="22">
    <source>
    </source>
</evidence>
<evidence type="ECO:0000269" key="23">
    <source>
    </source>
</evidence>
<evidence type="ECO:0000269" key="24">
    <source>
    </source>
</evidence>
<evidence type="ECO:0000269" key="25">
    <source>
    </source>
</evidence>
<evidence type="ECO:0000269" key="26">
    <source>
    </source>
</evidence>
<evidence type="ECO:0000269" key="27">
    <source>
    </source>
</evidence>
<evidence type="ECO:0000269" key="28">
    <source>
    </source>
</evidence>
<evidence type="ECO:0000269" key="29">
    <source>
    </source>
</evidence>
<evidence type="ECO:0000269" key="30">
    <source>
    </source>
</evidence>
<evidence type="ECO:0000269" key="31">
    <source>
    </source>
</evidence>
<evidence type="ECO:0000269" key="32">
    <source>
    </source>
</evidence>
<evidence type="ECO:0000269" key="33">
    <source>
    </source>
</evidence>
<evidence type="ECO:0000269" key="34">
    <source>
    </source>
</evidence>
<evidence type="ECO:0000269" key="35">
    <source>
    </source>
</evidence>
<evidence type="ECO:0000269" key="36">
    <source>
    </source>
</evidence>
<evidence type="ECO:0000305" key="37"/>
<evidence type="ECO:0000305" key="38">
    <source>
    </source>
</evidence>
<evidence type="ECO:0000312" key="39">
    <source>
        <dbReference type="HGNC" id="HGNC:13291"/>
    </source>
</evidence>
<evidence type="ECO:0007744" key="40">
    <source>
        <dbReference type="PDB" id="6H8C"/>
    </source>
</evidence>
<evidence type="ECO:0007744" key="41">
    <source>
    </source>
</evidence>
<evidence type="ECO:0007744" key="42">
    <source>
    </source>
</evidence>
<evidence type="ECO:0007829" key="43">
    <source>
        <dbReference type="PDB" id="6H8C"/>
    </source>
</evidence>
<evidence type="ECO:0007829" key="44">
    <source>
        <dbReference type="PDB" id="8Q6Q"/>
    </source>
</evidence>
<feature type="chain" id="PRO_0000212373" description="Gamma-aminobutyric acid receptor-associated protein-like 2">
    <location>
        <begin position="1"/>
        <end position="116"/>
    </location>
</feature>
<feature type="propeptide" id="PRO_0000423070" description="Removed in mature form" evidence="8">
    <location>
        <position position="117"/>
    </location>
</feature>
<feature type="site" description="Cleavage; by ATG4" evidence="8">
    <location>
        <begin position="116"/>
        <end position="117"/>
    </location>
</feature>
<feature type="modified residue" description="N6-acetyllysine" evidence="42">
    <location>
        <position position="24"/>
    </location>
</feature>
<feature type="modified residue" description="Phosphoserine" evidence="41">
    <location>
        <position position="39"/>
    </location>
</feature>
<feature type="modified residue" description="Phosphoserine; by TBK1" evidence="31">
    <location>
        <position position="87"/>
    </location>
</feature>
<feature type="modified residue" description="Phosphoserine; by TBK1" evidence="31">
    <location>
        <position position="88"/>
    </location>
</feature>
<feature type="lipid moiety-binding region" description="Phosphatidylethanolamine amidated glycine; alternate" evidence="7 34 38">
    <location>
        <position position="116"/>
    </location>
</feature>
<feature type="lipid moiety-binding region" description="Phosphatidylserine amidated glycine; alternate" evidence="34">
    <location>
        <position position="116"/>
    </location>
</feature>
<feature type="sequence variant" id="VAR_049756" description="In dbSNP:rs11556291.">
    <original>V</original>
    <variation>A</variation>
    <location>
        <position position="51"/>
    </location>
</feature>
<feature type="mutagenesis site" description="Strongly reduced interaction with UBA5." evidence="30">
    <original>R</original>
    <variation>A</variation>
    <location>
        <position position="47"/>
    </location>
</feature>
<feature type="mutagenesis site" description="Impaired phosphorylation by TBK1." evidence="31">
    <original>SS</original>
    <variation>AA</variation>
    <location>
        <begin position="87"/>
        <end position="88"/>
    </location>
</feature>
<feature type="mutagenesis site" description="Phospho-mimetic mutant; impaired interaction with ATG4 proteins, preventing cleavage at the C-terminus, conjugation to phosphatidylethanolamine." evidence="31">
    <original>SS</original>
    <variation>DD</variation>
    <location>
        <begin position="87"/>
        <end position="88"/>
    </location>
</feature>
<feature type="mutagenesis site" description="Phospho-mimetic mutant; abolished localization to autophagosomes." evidence="31">
    <original>S</original>
    <variation>D</variation>
    <location>
        <position position="88"/>
    </location>
</feature>
<feature type="mutagenesis site" description="Impairs localization at the autophagosomal membrane." evidence="8">
    <original>G</original>
    <variation>A</variation>
    <location>
        <position position="116"/>
    </location>
</feature>
<feature type="sequence conflict" description="In Ref. 4; AAD27779." evidence="37" ref="4">
    <original>V</original>
    <variation>F</variation>
    <location>
        <position position="29"/>
    </location>
</feature>
<feature type="helix" evidence="44">
    <location>
        <begin position="4"/>
        <end position="7"/>
    </location>
</feature>
<feature type="helix" evidence="44">
    <location>
        <begin position="11"/>
        <end position="24"/>
    </location>
</feature>
<feature type="strand" evidence="44">
    <location>
        <begin position="28"/>
        <end position="35"/>
    </location>
</feature>
<feature type="strand" evidence="43">
    <location>
        <begin position="39"/>
        <end position="41"/>
    </location>
</feature>
<feature type="strand" evidence="44">
    <location>
        <begin position="48"/>
        <end position="52"/>
    </location>
</feature>
<feature type="helix" evidence="44">
    <location>
        <begin position="57"/>
        <end position="67"/>
    </location>
</feature>
<feature type="strand" evidence="44">
    <location>
        <begin position="77"/>
        <end position="80"/>
    </location>
</feature>
<feature type="helix" evidence="44">
    <location>
        <begin position="91"/>
        <end position="98"/>
    </location>
</feature>
<feature type="strand" evidence="44">
    <location>
        <begin position="105"/>
        <end position="112"/>
    </location>
</feature>
<gene>
    <name evidence="39" type="primary">GABARAPL2</name>
    <name type="synonym">FLC3A</name>
    <name type="synonym">GEF2</name>
</gene>
<comment type="function">
    <text evidence="1 11 20">Ubiquitin-like modifier involved in intra-Golgi traffic (By similarity). Modulates intra-Golgi transport through coupling between NSF activity and SNAREs activation (By similarity). It first stimulates the ATPase activity of NSF which in turn stimulates the association with GOSR1 (By similarity). Involved in autophagy (PubMed:20418806, PubMed:23209295). Plays a role in mitophagy which contributes to regulate mitochondrial quantity and quality by eliminating the mitochondria to a basal level to fulfill cellular energy requirements and preventing excess ROS production (PubMed:20418806, PubMed:23209295). Whereas LC3s are involved in elongation of the phagophore membrane, the GABARAP/GATE-16 subfamily is essential for a later stage in autophagosome maturation (PubMed:20418806, PubMed:23209295).</text>
</comment>
<comment type="subunit">
    <text evidence="1 2 3 4 6 7 9 10 12 14 16 17 18 19 20 21 22 23 24 25 26 27 30 33 35 36">Monomer. Interacts with ATG3, ATG7, ATG13 and ULK1 (PubMed:11096062, PubMed:11146101, PubMed:11825910, PubMed:12507496, PubMed:23043107). Interacts with TP53INP1 and TP53INP2 (PubMed:19056683, PubMed:22421968, PubMed:22470510). Interacts with TBC1D25 (PubMed:21383079). Directly interacts with SQSTM1 and BNIP3 (PubMed:17580304, PubMed:23209295). Interacts with TECPR2 and PCM1 (PubMed:20562859, PubMed:24089205). Interacts with TBC1D5 (PubMed:22354992). Interacts with TRIM5 (PubMed:25127057). Interacts with MEFV and TRIM21 (PubMed:26347139). Interacts with WDFY3 (PubMed:24668264). Interacts with UBA5; promoting recruitment of UBA5 to the endoplasmic reticulum membrane (PubMed:26929408, PubMed:30990354). Interacts with GOSR1 (By similarity). Interacts with KBTBD6 and KBTBD7; the interaction is direct (PubMed:25684205). Interacts with reticulophagy regulators RETREG1, RETREG2 and RETREG3 (PubMed:34338405). Interacts with IRGM (PubMed:29420192). Interacts with DNM2 (PubMed:32315611). Interacts with NCOA4 (By similarity). Interacts with IRGQ (PubMed:39481378).</text>
</comment>
<comment type="interaction">
    <interactant intactId="EBI-720116">
        <id>P60520</id>
    </interactant>
    <interactant intactId="EBI-741181">
        <id>Q6RW13</id>
        <label>AGTRAP</label>
    </interactant>
    <organismsDiffer>false</organismsDiffer>
    <experiments>3</experiments>
</comment>
<comment type="interaction">
    <interactant intactId="EBI-720116">
        <id>P60520</id>
    </interactant>
    <interactant intactId="EBI-10217765">
        <id>Q8IVF2-2</id>
        <label>AHNAK2</label>
    </interactant>
    <organismsDiffer>false</organismsDiffer>
    <experiments>3</experiments>
</comment>
<comment type="interaction">
    <interactant intactId="EBI-720116">
        <id>P60520</id>
    </interactant>
    <interactant intactId="EBI-2513908">
        <id>Q9P2R3</id>
        <label>ANKFY1</label>
    </interactant>
    <organismsDiffer>false</organismsDiffer>
    <experiments>2</experiments>
</comment>
<comment type="interaction">
    <interactant intactId="EBI-720116">
        <id>P60520</id>
    </interactant>
    <interactant intactId="EBI-716933">
        <id>Q8N6T3</id>
        <label>ARFGAP1</label>
    </interactant>
    <organismsDiffer>false</organismsDiffer>
    <experiments>3</experiments>
</comment>
<comment type="interaction">
    <interactant intactId="EBI-720116">
        <id>P60520</id>
    </interactant>
    <interactant intactId="EBI-6288865">
        <id>Q8N6T3-2</id>
        <label>ARFGAP1</label>
    </interactant>
    <organismsDiffer>false</organismsDiffer>
    <experiments>3</experiments>
</comment>
<comment type="interaction">
    <interactant intactId="EBI-720116">
        <id>P60520</id>
    </interactant>
    <interactant intactId="EBI-2946739">
        <id>Q9BSB4</id>
        <label>ATG101</label>
    </interactant>
    <organismsDiffer>false</organismsDiffer>
    <experiments>2</experiments>
</comment>
<comment type="interaction">
    <interactant intactId="EBI-720116">
        <id>P60520</id>
    </interactant>
    <interactant intactId="EBI-2798775">
        <id>O75143</id>
        <label>ATG13</label>
    </interactant>
    <organismsDiffer>false</organismsDiffer>
    <experiments>4</experiments>
</comment>
<comment type="interaction">
    <interactant intactId="EBI-720116">
        <id>P60520</id>
    </interactant>
    <interactant intactId="EBI-535909">
        <id>Q676U5</id>
        <label>ATG16L1</label>
    </interactant>
    <organismsDiffer>false</organismsDiffer>
    <experiments>2</experiments>
</comment>
<comment type="interaction">
    <interactant intactId="EBI-720116">
        <id>P60520</id>
    </interactant>
    <interactant intactId="EBI-2514077">
        <id>Q2TAZ0</id>
        <label>ATG2A</label>
    </interactant>
    <organismsDiffer>false</organismsDiffer>
    <experiments>2</experiments>
</comment>
<comment type="interaction">
    <interactant intactId="EBI-720116">
        <id>P60520</id>
    </interactant>
    <interactant intactId="EBI-988094">
        <id>Q9NT62</id>
        <label>ATG3</label>
    </interactant>
    <organismsDiffer>false</organismsDiffer>
    <experiments>7</experiments>
</comment>
<comment type="interaction">
    <interactant intactId="EBI-720116">
        <id>P60520</id>
    </interactant>
    <interactant intactId="EBI-712014">
        <id>Q9Y4P1</id>
        <label>ATG4B</label>
    </interactant>
    <organismsDiffer>false</organismsDiffer>
    <experiments>12</experiments>
</comment>
<comment type="interaction">
    <interactant intactId="EBI-720116">
        <id>P60520</id>
    </interactant>
    <interactant intactId="EBI-987834">
        <id>O95352</id>
        <label>ATG7</label>
    </interactant>
    <organismsDiffer>false</organismsDiffer>
    <experiments>8</experiments>
</comment>
<comment type="interaction">
    <interactant intactId="EBI-720116">
        <id>P60520</id>
    </interactant>
    <interactant intactId="EBI-747430">
        <id>Q9BXK5</id>
        <label>BCL2L13</label>
    </interactant>
    <organismsDiffer>false</organismsDiffer>
    <experiments>4</experiments>
</comment>
<comment type="interaction">
    <interactant intactId="EBI-720116">
        <id>P60520</id>
    </interactant>
    <interactant intactId="EBI-849893">
        <id>O60238</id>
        <label>BNIP3L</label>
    </interactant>
    <organismsDiffer>false</organismsDiffer>
    <experiments>3</experiments>
</comment>
<comment type="interaction">
    <interactant intactId="EBI-720116">
        <id>P60520</id>
    </interactant>
    <interactant intactId="EBI-721848">
        <id>Q9NW68</id>
        <label>BSDC1</label>
    </interactant>
    <organismsDiffer>false</organismsDiffer>
    <experiments>3</experiments>
</comment>
<comment type="interaction">
    <interactant intactId="EBI-720116">
        <id>P60520</id>
    </interactant>
    <interactant intactId="EBI-749920">
        <id>Q9P1Z2</id>
        <label>CALCOCO1</label>
    </interactant>
    <organismsDiffer>false</organismsDiffer>
    <experiments>3</experiments>
</comment>
<comment type="interaction">
    <interactant intactId="EBI-720116">
        <id>P60520</id>
    </interactant>
    <interactant intactId="EBI-739580">
        <id>Q13137</id>
        <label>CALCOCO2</label>
    </interactant>
    <organismsDiffer>false</organismsDiffer>
    <experiments>7</experiments>
</comment>
<comment type="interaction">
    <interactant intactId="EBI-720116">
        <id>P60520</id>
    </interactant>
    <interactant intactId="EBI-2946907">
        <id>Q8WXU2</id>
        <label>DNAAF4</label>
    </interactant>
    <organismsDiffer>false</organismsDiffer>
    <experiments>2</experiments>
</comment>
<comment type="interaction">
    <interactant intactId="EBI-720116">
        <id>P60520</id>
    </interactant>
    <interactant intactId="EBI-349105">
        <id>P63167</id>
        <label>DYNLL1</label>
    </interactant>
    <organismsDiffer>false</organismsDiffer>
    <experiments>3</experiments>
</comment>
<comment type="interaction">
    <interactant intactId="EBI-720116">
        <id>P60520</id>
    </interactant>
    <interactant intactId="EBI-742371">
        <id>Q96FJ2</id>
        <label>DYNLL2</label>
    </interactant>
    <organismsDiffer>false</organismsDiffer>
    <experiments>3</experiments>
</comment>
<comment type="interaction">
    <interactant intactId="EBI-720116">
        <id>P60520</id>
    </interactant>
    <interactant intactId="EBI-297353">
        <id>P00533</id>
        <label>EGFR</label>
    </interactant>
    <organismsDiffer>false</organismsDiffer>
    <experiments>3</experiments>
</comment>
<comment type="interaction">
    <interactant intactId="EBI-720116">
        <id>P60520</id>
    </interactant>
    <interactant intactId="EBI-3059266">
        <id>Q8IVP5</id>
        <label>FUNDC1</label>
    </interactant>
    <organismsDiffer>false</organismsDiffer>
    <experiments>4</experiments>
</comment>
<comment type="interaction">
    <interactant intactId="EBI-720116">
        <id>P60520</id>
    </interactant>
    <interactant intactId="EBI-2869338">
        <id>Q9BQS8</id>
        <label>FYCO1</label>
    </interactant>
    <organismsDiffer>false</organismsDiffer>
    <experiments>2</experiments>
</comment>
<comment type="interaction">
    <interactant intactId="EBI-720116">
        <id>P60520</id>
    </interactant>
    <interactant intactId="EBI-356720">
        <id>P40939</id>
        <label>HADHA</label>
    </interactant>
    <organismsDiffer>false</organismsDiffer>
    <experiments>4</experiments>
</comment>
<comment type="interaction">
    <interactant intactId="EBI-720116">
        <id>P60520</id>
    </interactant>
    <interactant intactId="EBI-712814">
        <id>P54257</id>
        <label>HAP1</label>
    </interactant>
    <organismsDiffer>false</organismsDiffer>
    <experiments>3</experiments>
</comment>
<comment type="interaction">
    <interactant intactId="EBI-720116">
        <id>P60520</id>
    </interactant>
    <interactant intactId="EBI-4311436">
        <id>Q2T9L4</id>
        <label>INSYN1</label>
    </interactant>
    <organismsDiffer>false</organismsDiffer>
    <experiments>3</experiments>
</comment>
<comment type="interaction">
    <interactant intactId="EBI-720116">
        <id>P60520</id>
    </interactant>
    <interactant intactId="EBI-356424">
        <id>O00410</id>
        <label>IPO5</label>
    </interactant>
    <organismsDiffer>false</organismsDiffer>
    <experiments>6</experiments>
</comment>
<comment type="interaction">
    <interactant intactId="EBI-720116">
        <id>P60520</id>
    </interactant>
    <interactant intactId="EBI-749265">
        <id>Q8N6L0</id>
        <label>KASH5</label>
    </interactant>
    <organismsDiffer>false</organismsDiffer>
    <experiments>3</experiments>
</comment>
<comment type="interaction">
    <interactant intactId="EBI-720116">
        <id>P60520</id>
    </interactant>
    <interactant intactId="EBI-2514778">
        <id>Q86V97</id>
        <label>KBTBD6</label>
    </interactant>
    <organismsDiffer>false</organismsDiffer>
    <experiments>5</experiments>
</comment>
<comment type="interaction">
    <interactant intactId="EBI-720116">
        <id>P60520</id>
    </interactant>
    <interactant intactId="EBI-473695">
        <id>Q8WVZ9</id>
        <label>KBTBD7</label>
    </interactant>
    <organismsDiffer>false</organismsDiffer>
    <experiments>7</experiments>
</comment>
<comment type="interaction">
    <interactant intactId="EBI-720116">
        <id>P60520</id>
    </interactant>
    <interactant intactId="EBI-10181113">
        <id>Q8N8K9</id>
        <label>KIAA1958</label>
    </interactant>
    <organismsDiffer>false</organismsDiffer>
    <experiments>7</experiments>
</comment>
<comment type="interaction">
    <interactant intactId="EBI-720116">
        <id>P60520</id>
    </interactant>
    <interactant intactId="EBI-10988217">
        <id>Q96L93-6</id>
        <label>KIF16B</label>
    </interactant>
    <organismsDiffer>false</organismsDiffer>
    <experiments>3</experiments>
</comment>
<comment type="interaction">
    <interactant intactId="EBI-720116">
        <id>P60520</id>
    </interactant>
    <interactant intactId="EBI-10172290">
        <id>P60409</id>
        <label>KRTAP10-7</label>
    </interactant>
    <organismsDiffer>false</organismsDiffer>
    <experiments>6</experiments>
</comment>
<comment type="interaction">
    <interactant intactId="EBI-720116">
        <id>P60520</id>
    </interactant>
    <interactant intactId="EBI-10172052">
        <id>P60411</id>
        <label>KRTAP10-9</label>
    </interactant>
    <organismsDiffer>false</organismsDiffer>
    <experiments>3</experiments>
</comment>
<comment type="interaction">
    <interactant intactId="EBI-720116">
        <id>P60520</id>
    </interactant>
    <interactant intactId="EBI-2350056">
        <id>Q8N653</id>
        <label>LZTR1</label>
    </interactant>
    <organismsDiffer>false</organismsDiffer>
    <experiments>3</experiments>
</comment>
<comment type="interaction">
    <interactant intactId="EBI-720116">
        <id>P60520</id>
    </interactant>
    <interactant intactId="EBI-741109">
        <id>Q9UH92</id>
        <label>MLX</label>
    </interactant>
    <organismsDiffer>false</organismsDiffer>
    <experiments>5</experiments>
</comment>
<comment type="interaction">
    <interactant intactId="EBI-720116">
        <id>P60520</id>
    </interactant>
    <interactant intactId="EBI-8852072">
        <id>Q9UH92-3</id>
        <label>MLX</label>
    </interactant>
    <organismsDiffer>false</organismsDiffer>
    <experiments>3</experiments>
</comment>
<comment type="interaction">
    <interactant intactId="EBI-720116">
        <id>P60520</id>
    </interactant>
    <interactant intactId="EBI-742698">
        <id>Q14596</id>
        <label>NBR1</label>
    </interactant>
    <organismsDiffer>false</organismsDiffer>
    <experiments>11</experiments>
</comment>
<comment type="interaction">
    <interactant intactId="EBI-720116">
        <id>P60520</id>
    </interactant>
    <interactant intactId="EBI-80799">
        <id>Q8NI08</id>
        <label>NCOA7</label>
    </interactant>
    <organismsDiffer>false</organismsDiffer>
    <experiments>2</experiments>
</comment>
<comment type="interaction">
    <interactant intactId="EBI-720116">
        <id>P60520</id>
    </interactant>
    <interactant intactId="EBI-726944">
        <id>P46934</id>
        <label>NEDD4</label>
    </interactant>
    <organismsDiffer>false</organismsDiffer>
    <experiments>6</experiments>
</comment>
<comment type="interaction">
    <interactant intactId="EBI-720116">
        <id>P60520</id>
    </interactant>
    <interactant intactId="EBI-11980721">
        <id>P46934-3</id>
        <label>NEDD4</label>
    </interactant>
    <organismsDiffer>false</organismsDiffer>
    <experiments>3</experiments>
</comment>
<comment type="interaction">
    <interactant intactId="EBI-720116">
        <id>P60520</id>
    </interactant>
    <interactant intactId="EBI-1044009">
        <id>Q8TD19</id>
        <label>NEK9</label>
    </interactant>
    <organismsDiffer>false</organismsDiffer>
    <experiments>7</experiments>
</comment>
<comment type="interaction">
    <interactant intactId="EBI-720116">
        <id>P60520</id>
    </interactant>
    <interactant intactId="EBI-307133">
        <id>O75323</id>
        <label>NIPSNAP2</label>
    </interactant>
    <organismsDiffer>false</organismsDiffer>
    <experiments>6</experiments>
</comment>
<comment type="interaction">
    <interactant intactId="EBI-720116">
        <id>P60520</id>
    </interactant>
    <interactant intactId="EBI-3924801">
        <id>Q9NV35</id>
        <label>NUDT15</label>
    </interactant>
    <organismsDiffer>false</organismsDiffer>
    <experiments>3</experiments>
</comment>
<comment type="interaction">
    <interactant intactId="EBI-720116">
        <id>P60520</id>
    </interactant>
    <interactant intactId="EBI-1051317">
        <id>Q9H4L5</id>
        <label>OSBPL3</label>
    </interactant>
    <organismsDiffer>false</organismsDiffer>
    <experiments>3</experiments>
</comment>
<comment type="interaction">
    <interactant intactId="EBI-720116">
        <id>P60520</id>
    </interactant>
    <interactant intactId="EBI-741421">
        <id>Q15154</id>
        <label>PCM1</label>
    </interactant>
    <organismsDiffer>false</organismsDiffer>
    <experiments>2</experiments>
</comment>
<comment type="interaction">
    <interactant intactId="EBI-720116">
        <id>P60520</id>
    </interactant>
    <interactant intactId="EBI-367363">
        <id>Q9NS23</id>
        <label>RASSF1</label>
    </interactant>
    <organismsDiffer>false</organismsDiffer>
    <experiments>2</experiments>
</comment>
<comment type="interaction">
    <interactant intactId="EBI-720116">
        <id>P60520</id>
    </interactant>
    <interactant intactId="EBI-367390">
        <id>Q8WWW0</id>
        <label>RASSF5</label>
    </interactant>
    <organismsDiffer>false</organismsDiffer>
    <experiments>2</experiments>
</comment>
<comment type="interaction">
    <interactant intactId="EBI-720116">
        <id>P60520</id>
    </interactant>
    <interactant intactId="EBI-356710">
        <id>Q14257</id>
        <label>RCN2</label>
    </interactant>
    <organismsDiffer>false</organismsDiffer>
    <experiments>6</experiments>
</comment>
<comment type="interaction">
    <interactant intactId="EBI-720116">
        <id>P60520</id>
    </interactant>
    <interactant intactId="EBI-16159046">
        <id>Q9H6L5-1</id>
        <label>RETREG1</label>
    </interactant>
    <organismsDiffer>false</organismsDiffer>
    <experiments>3</experiments>
</comment>
<comment type="interaction">
    <interactant intactId="EBI-720116">
        <id>P60520</id>
    </interactant>
    <interactant intactId="EBI-13382642">
        <id>Q9H6L5-2</id>
        <label>RETREG1</label>
    </interactant>
    <organismsDiffer>false</organismsDiffer>
    <experiments>3</experiments>
</comment>
<comment type="interaction">
    <interactant intactId="EBI-720116">
        <id>P60520</id>
    </interactant>
    <interactant intactId="EBI-10192441">
        <id>Q86VR2</id>
        <label>RETREG3</label>
    </interactant>
    <organismsDiffer>false</organismsDiffer>
    <experiments>3</experiments>
</comment>
<comment type="interaction">
    <interactant intactId="EBI-720116">
        <id>P60520</id>
    </interactant>
    <interactant intactId="EBI-11959369">
        <id>Q8IZE3-2</id>
        <label>SCYL3</label>
    </interactant>
    <organismsDiffer>false</organismsDiffer>
    <experiments>4</experiments>
</comment>
<comment type="interaction">
    <interactant intactId="EBI-720116">
        <id>P60520</id>
    </interactant>
    <interactant intactId="EBI-727037">
        <id>Q9UH03</id>
        <label>SEPTIN3</label>
    </interactant>
    <organismsDiffer>false</organismsDiffer>
    <experiments>2</experiments>
</comment>
<comment type="interaction">
    <interactant intactId="EBI-720116">
        <id>P60520</id>
    </interactant>
    <interactant intactId="EBI-1181664">
        <id>Q9H0K1</id>
        <label>SIK2</label>
    </interactant>
    <organismsDiffer>false</organismsDiffer>
    <experiments>3</experiments>
</comment>
<comment type="interaction">
    <interactant intactId="EBI-720116">
        <id>P60520</id>
    </interactant>
    <interactant intactId="EBI-307104">
        <id>Q13501</id>
        <label>SQSTM1</label>
    </interactant>
    <organismsDiffer>false</organismsDiffer>
    <experiments>24</experiments>
</comment>
<comment type="interaction">
    <interactant intactId="EBI-720116">
        <id>P60520</id>
    </interactant>
    <interactant intactId="EBI-2947137">
        <id>O95210</id>
        <label>STBD1</label>
    </interactant>
    <organismsDiffer>false</organismsDiffer>
    <experiments>6</experiments>
</comment>
<comment type="interaction">
    <interactant intactId="EBI-720116">
        <id>P60520</id>
    </interactant>
    <interactant intactId="EBI-992580">
        <id>Q13188</id>
        <label>STK3</label>
    </interactant>
    <organismsDiffer>false</organismsDiffer>
    <experiments>2</experiments>
</comment>
<comment type="interaction">
    <interactant intactId="EBI-720116">
        <id>P60520</id>
    </interactant>
    <interactant intactId="EBI-367376">
        <id>Q13043</id>
        <label>STK4</label>
    </interactant>
    <organismsDiffer>false</organismsDiffer>
    <experiments>2</experiments>
</comment>
<comment type="interaction">
    <interactant intactId="EBI-720116">
        <id>P60520</id>
    </interactant>
    <interactant intactId="EBI-529518">
        <id>Q86VP1</id>
        <label>TAX1BP1</label>
    </interactant>
    <organismsDiffer>false</organismsDiffer>
    <experiments>3</experiments>
</comment>
<comment type="interaction">
    <interactant intactId="EBI-720116">
        <id>P60520</id>
    </interactant>
    <interactant intactId="EBI-1048247">
        <id>Q8TC07</id>
        <label>TBC1D15</label>
    </interactant>
    <organismsDiffer>false</organismsDiffer>
    <experiments>2</experiments>
</comment>
<comment type="interaction">
    <interactant intactId="EBI-720116">
        <id>P60520</id>
    </interactant>
    <interactant intactId="EBI-11899977">
        <id>Q3MII6</id>
        <label>TBC1D25</label>
    </interactant>
    <organismsDiffer>false</organismsDiffer>
    <experiments>5</experiments>
</comment>
<comment type="interaction">
    <interactant intactId="EBI-720116">
        <id>P60520</id>
    </interactant>
    <interactant intactId="EBI-2947180">
        <id>Q9UPU7</id>
        <label>TBC1D2B</label>
    </interactant>
    <organismsDiffer>false</organismsDiffer>
    <experiments>3</experiments>
</comment>
<comment type="interaction">
    <interactant intactId="EBI-720116">
        <id>P60520</id>
    </interactant>
    <interactant intactId="EBI-10217641">
        <id>B9A6K1</id>
        <label>TBC1D5</label>
    </interactant>
    <organismsDiffer>false</organismsDiffer>
    <experiments>3</experiments>
</comment>
<comment type="interaction">
    <interactant intactId="EBI-720116">
        <id>P60520</id>
    </interactant>
    <interactant intactId="EBI-742381">
        <id>Q92609</id>
        <label>TBC1D5</label>
    </interactant>
    <organismsDiffer>false</organismsDiffer>
    <experiments>6</experiments>
</comment>
<comment type="interaction">
    <interactant intactId="EBI-720116">
        <id>P60520</id>
    </interactant>
    <interactant intactId="EBI-10217736">
        <id>Q66K14-2</id>
        <label>TBC1D9B</label>
    </interactant>
    <organismsDiffer>false</organismsDiffer>
    <experiments>3</experiments>
</comment>
<comment type="interaction">
    <interactant intactId="EBI-720116">
        <id>P60520</id>
    </interactant>
    <interactant intactId="EBI-2946991">
        <id>O15040</id>
        <label>TECPR2</label>
    </interactant>
    <organismsDiffer>false</organismsDiffer>
    <experiments>2</experiments>
</comment>
<comment type="interaction">
    <interactant intactId="EBI-720116">
        <id>P60520</id>
    </interactant>
    <interactant intactId="EBI-10329860">
        <id>Q9Y6I9</id>
        <label>TEX264</label>
    </interactant>
    <organismsDiffer>false</organismsDiffer>
    <experiments>4</experiments>
</comment>
<comment type="interaction">
    <interactant intactId="EBI-720116">
        <id>P60520</id>
    </interactant>
    <interactant intactId="EBI-357849">
        <id>Q15025</id>
        <label>TNIP1</label>
    </interactant>
    <organismsDiffer>false</organismsDiffer>
    <experiments>6</experiments>
</comment>
<comment type="interaction">
    <interactant intactId="EBI-720116">
        <id>P60520</id>
    </interactant>
    <interactant intactId="EBI-9986117">
        <id>Q96A56</id>
        <label>TP53INP1</label>
    </interactant>
    <organismsDiffer>false</organismsDiffer>
    <experiments>6</experiments>
</comment>
<comment type="interaction">
    <interactant intactId="EBI-720116">
        <id>P60520</id>
    </interactant>
    <interactant intactId="EBI-11993364">
        <id>Q9H8W5-2</id>
        <label>TRIM45</label>
    </interactant>
    <organismsDiffer>false</organismsDiffer>
    <experiments>3</experiments>
</comment>
<comment type="interaction">
    <interactant intactId="EBI-720116">
        <id>P60520</id>
    </interactant>
    <interactant intactId="EBI-746981">
        <id>Q969E8</id>
        <label>TSR2</label>
    </interactant>
    <organismsDiffer>false</organismsDiffer>
    <experiments>11</experiments>
</comment>
<comment type="interaction">
    <interactant intactId="EBI-720116">
        <id>P60520</id>
    </interactant>
    <interactant intactId="EBI-747805">
        <id>Q9GZZ9</id>
        <label>UBA5</label>
    </interactant>
    <organismsDiffer>false</organismsDiffer>
    <experiments>19</experiments>
</comment>
<comment type="interaction">
    <interactant intactId="EBI-720116">
        <id>P60520</id>
    </interactant>
    <interactant intactId="EBI-908831">
        <id>O75385</id>
        <label>ULK1</label>
    </interactant>
    <organismsDiffer>false</organismsDiffer>
    <experiments>4</experiments>
</comment>
<comment type="interaction">
    <interactant intactId="EBI-720116">
        <id>P60520</id>
    </interactant>
    <interactant intactId="EBI-1569256">
        <id>Q8IZQ1</id>
        <label>WDFY3</label>
    </interactant>
    <organismsDiffer>false</organismsDiffer>
    <experiments>3</experiments>
</comment>
<comment type="interaction">
    <interactant intactId="EBI-720116">
        <id>P60520</id>
    </interactant>
    <interactant intactId="EBI-2515601">
        <id>Q8N680</id>
        <label>ZBTB2</label>
    </interactant>
    <organismsDiffer>false</organismsDiffer>
    <experiments>3</experiments>
</comment>
<comment type="interaction">
    <interactant intactId="EBI-720116">
        <id>P60520</id>
    </interactant>
    <interactant intactId="EBI-10251462">
        <id>Q6NX45</id>
        <label>ZNF774</label>
    </interactant>
    <organismsDiffer>false</organismsDiffer>
    <experiments>3</experiments>
</comment>
<comment type="interaction">
    <interactant intactId="EBI-720116">
        <id>P60520</id>
    </interactant>
    <interactant intactId="EBI-1774669">
        <id>Q9Z2F7</id>
        <label>Bnip3l</label>
    </interactant>
    <organismsDiffer>true</organismsDiffer>
    <experiments>2</experiments>
</comment>
<comment type="subcellular location">
    <subcellularLocation>
        <location evidence="7 8 9 10 15 31">Cytoplasmic vesicle</location>
        <location evidence="7 8 9 10 15 31">Autophagosome</location>
    </subcellularLocation>
    <subcellularLocation>
        <location evidence="30">Endoplasmic reticulum membrane</location>
    </subcellularLocation>
    <subcellularLocation>
        <location evidence="1">Golgi apparatus</location>
    </subcellularLocation>
</comment>
<comment type="tissue specificity">
    <text evidence="4 5">Ubiquitous. Expressed at high levels in the brain, heart, prostate, ovary, spleen and skeletal muscle. Expressed at very low levels in lung, thymus and small intestine.</text>
</comment>
<comment type="PTM">
    <text evidence="2 8 13 28 29 31 34">The precursor molecule is cleaved by ATG4 (ATG4A, ATG4B, ATG4C or ATG4D) to expose the glycine at the C-terminus and form the cytosolic form, GABARAPL2-I (PubMed:15169837, PubMed:20818167, PubMed:30661429, PubMed:31709703). The processed form is then activated by APG7L/ATG7, transferred to ATG3 and conjugated to phosphatidylethanolamine (PE) phospholipid to form the membrane-bound form, GABARAPL2-II (PubMed:15169837, PubMed:31709703). During non-canonical autophagy, the processed form is conjugated to phosphatidylserine (PS) phospholipid (PubMed:33909989). ATG4 proteins also mediate the delipidation of PE-conjugated forms required for GABARAPL2 recycling when autophagosomes fuse with lysosomes (PubMed:29458288, PubMed:31709703, PubMed:33909989). In addition, ATG4B and ATG4D mediate delipidation of ATG8 proteins conjugated to PS during non-canonical autophagy (PubMed:33909989). ATG4B constitutes the major protein for proteolytic activation (PubMed:30661429). ATG4D is the main enzyme for delipidation activity (By similarity).</text>
</comment>
<comment type="PTM">
    <text evidence="32 34">(Microbial infection) The Legionella effector RavZ is a deconjugating enzyme that hydrolyzes the amide bond between the C-terminal glycine residue and an adjacent aromatic residue in ATG8 proteins conjugated to phosphatidylethanolamine (PE), producing an ATG8 protein that is resistant to reconjugation by the host machinery due to the cleavage of the reactive C-terminal glycine (PubMed:31722778). RavZ is also able to mediate delipidation of ATG8 proteins conjugated to phosphatidylserine (PS) (PubMed:33909989).</text>
</comment>
<comment type="PTM">
    <text evidence="31">Phosphorylation at Ser-87 and Ser-88 by TBK1 prevents interaction with ATG4 (ATG4A, ATG4B, ATG4C or ATG4D) (PubMed:31709703). Phosphorylation by TBK1 on autophagosomes prevents their delipidation by ATG4 and premature removal from nascent autophagosomes (PubMed:31709703).</text>
</comment>
<comment type="similarity">
    <text evidence="37">Belongs to the ATG8 family.</text>
</comment>